<protein>
    <recommendedName>
        <fullName>Transport protein particle subunit trs85-2</fullName>
        <shortName>TRAPP subunit trs85-2</shortName>
    </recommendedName>
</protein>
<evidence type="ECO:0000250" key="1"/>
<evidence type="ECO:0000305" key="2"/>
<name>TR852_SCHPO</name>
<proteinExistence type="inferred from homology"/>
<sequence>MESNLSAKGIFQHASANASGELFQEPVTEDLEKVMQSKGLYSMEELCSIIQEAYAPRVSVLCSRDADEFAMRKGYPKGFWELLYPFGDRIRGKVNRRGMNGEMLTLENLNLHFVPIDALESHLSEASFPSLRSVLCERYPGLVSPEPPSDYSFGVHYKNVERWAWTLAHEGNYQMPLPVYVRQLLTGIPITPFETFSHPVAHLVVVTSHNPSPFESLRSLINSIPYLSLPAFVFNDINYLFVYVHDEDQHDLELSMAIFDTMKQTFGDCGYFLRLHSQKATLDYEHTVPFPTSSWLSAEERLHLLSNTDTEIRLLFESDNESLRRLSSHIAFNGIVSYLDKCVRAWDDQYASPRRGITGKLLFASRKYLSSSNASTNSNYFPSSNAYRPFSPEAYLRKLADYSFMLRDYSHANQIYEIASRQYENDGACLYSAASLEMIVITEHILHLKMPYMSLTNTLRINEYMQSAMLNYLNKSFNSYYHAARCFLLLGQFLSCLPAPKVDDAANWNAGLLYSKRLGPVGRAMIFQQTHTLFKSLSYLKTESTDPFSNKRTRKAALWCVLTADAWLRCRIPFRAKPFVEEAKLFYGKIDWKDLKECVAALDEVEVSKQPASNIPSS</sequence>
<accession>O74748</accession>
<gene>
    <name type="primary">trs85-2</name>
    <name type="ORF">SPBC1734.07c</name>
</gene>
<keyword id="KW-0931">ER-Golgi transport</keyword>
<keyword id="KW-0333">Golgi apparatus</keyword>
<keyword id="KW-0469">Meiosis</keyword>
<keyword id="KW-1185">Reference proteome</keyword>
<keyword id="KW-0813">Transport</keyword>
<organism>
    <name type="scientific">Schizosaccharomyces pombe (strain 972 / ATCC 24843)</name>
    <name type="common">Fission yeast</name>
    <dbReference type="NCBI Taxonomy" id="284812"/>
    <lineage>
        <taxon>Eukaryota</taxon>
        <taxon>Fungi</taxon>
        <taxon>Dikarya</taxon>
        <taxon>Ascomycota</taxon>
        <taxon>Taphrinomycotina</taxon>
        <taxon>Schizosaccharomycetes</taxon>
        <taxon>Schizosaccharomycetales</taxon>
        <taxon>Schizosaccharomycetaceae</taxon>
        <taxon>Schizosaccharomyces</taxon>
    </lineage>
</organism>
<dbReference type="EMBL" id="CU329671">
    <property type="protein sequence ID" value="CAA21301.1"/>
    <property type="molecule type" value="Genomic_DNA"/>
</dbReference>
<dbReference type="PIR" id="T39654">
    <property type="entry name" value="T39654"/>
</dbReference>
<dbReference type="RefSeq" id="NP_595424.1">
    <property type="nucleotide sequence ID" value="NM_001021332.2"/>
</dbReference>
<dbReference type="SMR" id="O74748"/>
<dbReference type="BioGRID" id="276422">
    <property type="interactions" value="25"/>
</dbReference>
<dbReference type="FunCoup" id="O74748">
    <property type="interactions" value="94"/>
</dbReference>
<dbReference type="STRING" id="284812.O74748"/>
<dbReference type="iPTMnet" id="O74748"/>
<dbReference type="PaxDb" id="4896-SPBC1734.07c.1"/>
<dbReference type="EnsemblFungi" id="SPBC1734.07c.1">
    <property type="protein sequence ID" value="SPBC1734.07c.1:pep"/>
    <property type="gene ID" value="SPBC1734.07c"/>
</dbReference>
<dbReference type="PomBase" id="SPBC1734.07c"/>
<dbReference type="VEuPathDB" id="FungiDB:SPBC1734.07c"/>
<dbReference type="eggNOG" id="KOG1938">
    <property type="taxonomic scope" value="Eukaryota"/>
</dbReference>
<dbReference type="HOGENOM" id="CLU_014185_0_0_1"/>
<dbReference type="InParanoid" id="O74748"/>
<dbReference type="OMA" id="PHMENRV"/>
<dbReference type="PhylomeDB" id="O74748"/>
<dbReference type="PRO" id="PR:O74748"/>
<dbReference type="Proteomes" id="UP000002485">
    <property type="component" value="Chromosome II"/>
</dbReference>
<dbReference type="GO" id="GO:0005829">
    <property type="term" value="C:cytosol"/>
    <property type="evidence" value="ECO:0007005"/>
    <property type="project" value="PomBase"/>
</dbReference>
<dbReference type="GO" id="GO:1990072">
    <property type="term" value="C:TRAPPIII protein complex"/>
    <property type="evidence" value="ECO:0000318"/>
    <property type="project" value="GO_Central"/>
</dbReference>
<dbReference type="GO" id="GO:0006886">
    <property type="term" value="P:intracellular protein transport"/>
    <property type="evidence" value="ECO:0000266"/>
    <property type="project" value="PomBase"/>
</dbReference>
<dbReference type="GO" id="GO:0016236">
    <property type="term" value="P:macroautophagy"/>
    <property type="evidence" value="ECO:0000305"/>
    <property type="project" value="PomBase"/>
</dbReference>
<dbReference type="GO" id="GO:0051321">
    <property type="term" value="P:meiotic cell cycle"/>
    <property type="evidence" value="ECO:0007669"/>
    <property type="project" value="UniProtKB-KW"/>
</dbReference>
<dbReference type="GO" id="GO:0016192">
    <property type="term" value="P:vesicle-mediated transport"/>
    <property type="evidence" value="ECO:0007669"/>
    <property type="project" value="UniProtKB-KW"/>
</dbReference>
<dbReference type="InterPro" id="IPR024420">
    <property type="entry name" value="TRAPP_III_complex_Trs85"/>
</dbReference>
<dbReference type="PANTHER" id="PTHR12975:SF6">
    <property type="entry name" value="TRAFFICKING PROTEIN PARTICLE COMPLEX SUBUNIT 8"/>
    <property type="match status" value="1"/>
</dbReference>
<dbReference type="PANTHER" id="PTHR12975">
    <property type="entry name" value="TRANSPORT PROTEIN TRAPP"/>
    <property type="match status" value="1"/>
</dbReference>
<dbReference type="Pfam" id="PF12739">
    <property type="entry name" value="TRAPPC-Trs85"/>
    <property type="match status" value="1"/>
</dbReference>
<feature type="chain" id="PRO_0000343162" description="Transport protein particle subunit trs85-2">
    <location>
        <begin position="1"/>
        <end position="618"/>
    </location>
</feature>
<reference key="1">
    <citation type="journal article" date="2002" name="Nature">
        <title>The genome sequence of Schizosaccharomyces pombe.</title>
        <authorList>
            <person name="Wood V."/>
            <person name="Gwilliam R."/>
            <person name="Rajandream M.A."/>
            <person name="Lyne M.H."/>
            <person name="Lyne R."/>
            <person name="Stewart A."/>
            <person name="Sgouros J.G."/>
            <person name="Peat N."/>
            <person name="Hayles J."/>
            <person name="Baker S.G."/>
            <person name="Basham D."/>
            <person name="Bowman S."/>
            <person name="Brooks K."/>
            <person name="Brown D."/>
            <person name="Brown S."/>
            <person name="Chillingworth T."/>
            <person name="Churcher C.M."/>
            <person name="Collins M."/>
            <person name="Connor R."/>
            <person name="Cronin A."/>
            <person name="Davis P."/>
            <person name="Feltwell T."/>
            <person name="Fraser A."/>
            <person name="Gentles S."/>
            <person name="Goble A."/>
            <person name="Hamlin N."/>
            <person name="Harris D.E."/>
            <person name="Hidalgo J."/>
            <person name="Hodgson G."/>
            <person name="Holroyd S."/>
            <person name="Hornsby T."/>
            <person name="Howarth S."/>
            <person name="Huckle E.J."/>
            <person name="Hunt S."/>
            <person name="Jagels K."/>
            <person name="James K.D."/>
            <person name="Jones L."/>
            <person name="Jones M."/>
            <person name="Leather S."/>
            <person name="McDonald S."/>
            <person name="McLean J."/>
            <person name="Mooney P."/>
            <person name="Moule S."/>
            <person name="Mungall K.L."/>
            <person name="Murphy L.D."/>
            <person name="Niblett D."/>
            <person name="Odell C."/>
            <person name="Oliver K."/>
            <person name="O'Neil S."/>
            <person name="Pearson D."/>
            <person name="Quail M.A."/>
            <person name="Rabbinowitsch E."/>
            <person name="Rutherford K.M."/>
            <person name="Rutter S."/>
            <person name="Saunders D."/>
            <person name="Seeger K."/>
            <person name="Sharp S."/>
            <person name="Skelton J."/>
            <person name="Simmonds M.N."/>
            <person name="Squares R."/>
            <person name="Squares S."/>
            <person name="Stevens K."/>
            <person name="Taylor K."/>
            <person name="Taylor R.G."/>
            <person name="Tivey A."/>
            <person name="Walsh S.V."/>
            <person name="Warren T."/>
            <person name="Whitehead S."/>
            <person name="Woodward J.R."/>
            <person name="Volckaert G."/>
            <person name="Aert R."/>
            <person name="Robben J."/>
            <person name="Grymonprez B."/>
            <person name="Weltjens I."/>
            <person name="Vanstreels E."/>
            <person name="Rieger M."/>
            <person name="Schaefer M."/>
            <person name="Mueller-Auer S."/>
            <person name="Gabel C."/>
            <person name="Fuchs M."/>
            <person name="Duesterhoeft A."/>
            <person name="Fritzc C."/>
            <person name="Holzer E."/>
            <person name="Moestl D."/>
            <person name="Hilbert H."/>
            <person name="Borzym K."/>
            <person name="Langer I."/>
            <person name="Beck A."/>
            <person name="Lehrach H."/>
            <person name="Reinhardt R."/>
            <person name="Pohl T.M."/>
            <person name="Eger P."/>
            <person name="Zimmermann W."/>
            <person name="Wedler H."/>
            <person name="Wambutt R."/>
            <person name="Purnelle B."/>
            <person name="Goffeau A."/>
            <person name="Cadieu E."/>
            <person name="Dreano S."/>
            <person name="Gloux S."/>
            <person name="Lelaure V."/>
            <person name="Mottier S."/>
            <person name="Galibert F."/>
            <person name="Aves S.J."/>
            <person name="Xiang Z."/>
            <person name="Hunt C."/>
            <person name="Moore K."/>
            <person name="Hurst S.M."/>
            <person name="Lucas M."/>
            <person name="Rochet M."/>
            <person name="Gaillardin C."/>
            <person name="Tallada V.A."/>
            <person name="Garzon A."/>
            <person name="Thode G."/>
            <person name="Daga R.R."/>
            <person name="Cruzado L."/>
            <person name="Jimenez J."/>
            <person name="Sanchez M."/>
            <person name="del Rey F."/>
            <person name="Benito J."/>
            <person name="Dominguez A."/>
            <person name="Revuelta J.L."/>
            <person name="Moreno S."/>
            <person name="Armstrong J."/>
            <person name="Forsburg S.L."/>
            <person name="Cerutti L."/>
            <person name="Lowe T."/>
            <person name="McCombie W.R."/>
            <person name="Paulsen I."/>
            <person name="Potashkin J."/>
            <person name="Shpakovski G.V."/>
            <person name="Ussery D."/>
            <person name="Barrell B.G."/>
            <person name="Nurse P."/>
        </authorList>
    </citation>
    <scope>NUCLEOTIDE SEQUENCE [LARGE SCALE GENOMIC DNA]</scope>
    <source>
        <strain>972 / ATCC 24843</strain>
    </source>
</reference>
<comment type="function">
    <text evidence="1">Component of the TRAPP I and TRAPP II complexes. TRAPP I plays a key role in the late stages of endoplasmic reticulum to Golgi traffic. TRAPP II seems to play a role in intra-Golgi transport. Has a role late in meiosis following DNA replication (By similarity).</text>
</comment>
<comment type="subunit">
    <text>Part of the multisubunit TRAPP (transport protein particle) complexes I and II.</text>
</comment>
<comment type="subcellular location">
    <subcellularLocation>
        <location evidence="1">Golgi apparatus</location>
        <location evidence="1">cis-Golgi network</location>
    </subcellularLocation>
</comment>
<comment type="similarity">
    <text evidence="2">Belongs to the TRS85 family.</text>
</comment>